<sequence length="310" mass="35863">MESTQQMVSSIINTSFEAAVVAATSTLELMGIQYDYNEVFTRVKSKFDYVMDDSGVKNNLLGKAITIDQALNGKFGSAIRNRNWMTDSKTVAKLDEDVNKLRMTLSSKGIDQKMRVLNACFSVKRIPGKSSSIIKCTRLMKDKIERGEVEVDDSYVDEKMEIDTIDWKSRYDQLEKRFESLKQRVNEKYNTWVQKAKKVNENMYSLQNVISQQQNQIADLQQYCNKLEADLQGKFSSLVSSVEWYLRSMELPDDVKNDIEQQLNSIDLINPINAIDDIESLIRNLIQDYDRTFLMLKGLLKQCNYEYAYE</sequence>
<protein>
    <recommendedName>
        <fullName evidence="1">Non-structural protein 3</fullName>
        <shortName evidence="1">NSP3</shortName>
    </recommendedName>
    <alternativeName>
        <fullName evidence="1">NCVP4</fullName>
    </alternativeName>
    <alternativeName>
        <fullName evidence="1">Non-structural RNA-binding protein 34</fullName>
        <shortName evidence="1">NS34</shortName>
    </alternativeName>
</protein>
<feature type="chain" id="PRO_0000369456" description="Non-structural protein 3">
    <location>
        <begin position="1"/>
        <end position="310"/>
    </location>
</feature>
<feature type="region of interest" description="RNA-binding" evidence="1">
    <location>
        <begin position="1"/>
        <end position="146"/>
    </location>
</feature>
<feature type="region of interest" description="Dimerization" evidence="1">
    <location>
        <begin position="147"/>
        <end position="203"/>
    </location>
</feature>
<feature type="region of interest" description="Interaction with host ZC3H7B" evidence="1">
    <location>
        <begin position="167"/>
        <end position="231"/>
    </location>
</feature>
<feature type="region of interest" description="Interaction with host EIF4G1" evidence="1">
    <location>
        <begin position="205"/>
        <end position="310"/>
    </location>
</feature>
<feature type="coiled-coil region" evidence="1">
    <location>
        <begin position="163"/>
        <end position="234"/>
    </location>
</feature>
<feature type="sequence variant">
    <original>E</original>
    <variation>D</variation>
    <location>
        <position position="310"/>
    </location>
</feature>
<proteinExistence type="inferred from homology"/>
<organism>
    <name type="scientific">Rotavirus A (strain RVA/Human/United States/M/1976/G3P[X])</name>
    <name type="common">RV-A</name>
    <dbReference type="NCBI Taxonomy" id="578834"/>
    <lineage>
        <taxon>Viruses</taxon>
        <taxon>Riboviria</taxon>
        <taxon>Orthornavirae</taxon>
        <taxon>Duplornaviricota</taxon>
        <taxon>Resentoviricetes</taxon>
        <taxon>Reovirales</taxon>
        <taxon>Sedoreoviridae</taxon>
        <taxon>Rotavirus</taxon>
        <taxon>Rotavirus A</taxon>
    </lineage>
</organism>
<keyword id="KW-0175">Coiled coil</keyword>
<keyword id="KW-1035">Host cytoplasm</keyword>
<keyword id="KW-0945">Host-virus interaction</keyword>
<keyword id="KW-0694">RNA-binding</keyword>
<keyword id="KW-0810">Translation regulation</keyword>
<organismHost>
    <name type="scientific">Homo sapiens</name>
    <name type="common">Human</name>
    <dbReference type="NCBI Taxonomy" id="9606"/>
</organismHost>
<evidence type="ECO:0000255" key="1">
    <source>
        <dbReference type="HAMAP-Rule" id="MF_04094"/>
    </source>
</evidence>
<accession>Q9ICB2</accession>
<accession>Q91ME7</accession>
<dbReference type="EMBL" id="AF190171">
    <property type="protein sequence ID" value="AAF81407.1"/>
    <property type="molecule type" value="Genomic_RNA"/>
</dbReference>
<dbReference type="EMBL" id="AF190172">
    <property type="protein sequence ID" value="AAF81408.1"/>
    <property type="molecule type" value="Genomic_RNA"/>
</dbReference>
<dbReference type="EMBL" id="AF338246">
    <property type="protein sequence ID" value="AAK74116.1"/>
    <property type="molecule type" value="Genomic_RNA"/>
</dbReference>
<dbReference type="EMBL" id="AF338247">
    <property type="protein sequence ID" value="AAK74117.1"/>
    <property type="molecule type" value="Genomic_RNA"/>
</dbReference>
<dbReference type="EMBL" id="AF338247">
    <property type="protein sequence ID" value="AAK74118.1"/>
    <property type="molecule type" value="Genomic_RNA"/>
</dbReference>
<dbReference type="SMR" id="Q9ICB2"/>
<dbReference type="GO" id="GO:0030430">
    <property type="term" value="C:host cell cytoplasm"/>
    <property type="evidence" value="ECO:0007669"/>
    <property type="project" value="UniProtKB-SubCell"/>
</dbReference>
<dbReference type="GO" id="GO:0003723">
    <property type="term" value="F:RNA binding"/>
    <property type="evidence" value="ECO:0007669"/>
    <property type="project" value="UniProtKB-UniRule"/>
</dbReference>
<dbReference type="GO" id="GO:0006417">
    <property type="term" value="P:regulation of translation"/>
    <property type="evidence" value="ECO:0007669"/>
    <property type="project" value="UniProtKB-UniRule"/>
</dbReference>
<dbReference type="CDD" id="cd20714">
    <property type="entry name" value="NSP3_rotavirus"/>
    <property type="match status" value="1"/>
</dbReference>
<dbReference type="Gene3D" id="3.30.70.1610">
    <property type="match status" value="1"/>
</dbReference>
<dbReference type="Gene3D" id="1.20.5.970">
    <property type="entry name" value="Nonstructural RNA-binding protein"/>
    <property type="match status" value="1"/>
</dbReference>
<dbReference type="Gene3D" id="6.10.280.20">
    <property type="entry name" value="Rotavirus non-structural protein NSP3, N-terminal domain"/>
    <property type="match status" value="1"/>
</dbReference>
<dbReference type="HAMAP" id="MF_04094">
    <property type="entry name" value="ROTA_A_NSP3"/>
    <property type="match status" value="1"/>
</dbReference>
<dbReference type="HAMAP" id="MF_04090">
    <property type="entry name" value="ROTA_NSP3"/>
    <property type="match status" value="1"/>
</dbReference>
<dbReference type="InterPro" id="IPR042519">
    <property type="entry name" value="NSP3_N_rotavirus"/>
</dbReference>
<dbReference type="InterPro" id="IPR036082">
    <property type="entry name" value="NSP3_sf"/>
</dbReference>
<dbReference type="InterPro" id="IPR002873">
    <property type="entry name" value="Rotavirus_NSP3"/>
</dbReference>
<dbReference type="Pfam" id="PF01665">
    <property type="entry name" value="Rota_NSP3"/>
    <property type="match status" value="1"/>
</dbReference>
<dbReference type="SUPFAM" id="SSF69903">
    <property type="entry name" value="NSP3 homodimer"/>
    <property type="match status" value="1"/>
</dbReference>
<dbReference type="SUPFAM" id="SSF58030">
    <property type="entry name" value="Rotavirus nonstructural proteins"/>
    <property type="match status" value="1"/>
</dbReference>
<comment type="function">
    <text evidence="1">Plays an important role in stimulating the translation of viral mRNAs. These mRNAs are capped but not polyadenylated, instead terminating in a conserved sequence 'GACC' at the 3' that is recognized by NSP3, which competes with host PABPC1 for EIF4G1 binding. The interaction between NSP3 and host EIF4G1 stabilizes the EIF4E-EIF4G1 interaction, thereby facilitating the initiation of capped mRNA translation.</text>
</comment>
<comment type="subunit">
    <text evidence="1">Homodimer. Interacts (via the coiled-coil region) with host ZC3H7B (via LD motif). Interacts with host EIF4G1.</text>
</comment>
<comment type="subcellular location">
    <subcellularLocation>
        <location evidence="1">Host cytoplasm</location>
    </subcellularLocation>
</comment>
<comment type="similarity">
    <text evidence="1">Belongs to the rotavirus NSP3 family.</text>
</comment>
<name>NSP3_ROTAM</name>
<reference key="1">
    <citation type="journal article" date="2000" name="Virus Res.">
        <title>Rearrangement generated in double genes, NSP1 and NSP3, of viable progenies from a human rotavirus strain.</title>
        <authorList>
            <person name="Kojima K."/>
            <person name="Taniguchi K."/>
            <person name="Kawagishi-Kobayashi M."/>
            <person name="Matsuno S."/>
            <person name="Urasawa S."/>
        </authorList>
    </citation>
    <scope>NUCLEOTIDE SEQUENCE [GENOMIC RNA]</scope>
    <source>
        <strain>IGV-F</strain>
        <strain>IGV-S</strain>
    </source>
</reference>
<reference key="2">
    <citation type="journal article" date="2001" name="J. Virol.">
        <title>A human rotavirus with rearranged genes 7 and 11 encodes a modified NSP3 protein and suggests an additional mechanism for gene rearrangement.</title>
        <authorList>
            <person name="Gault E."/>
            <person name="Schnepf N."/>
            <person name="Poncet D."/>
            <person name="Servant A."/>
            <person name="Teran S."/>
            <person name="Garbarg-Chenon A."/>
        </authorList>
    </citation>
    <scope>NUCLEOTIDE SEQUENCE [GENOMIC RNA]</scope>
</reference>